<dbReference type="EC" id="6.1.1.10" evidence="1"/>
<dbReference type="EMBL" id="CP000678">
    <property type="protein sequence ID" value="ABQ86276.1"/>
    <property type="molecule type" value="Genomic_DNA"/>
</dbReference>
<dbReference type="RefSeq" id="WP_004033969.1">
    <property type="nucleotide sequence ID" value="NZ_CP117965.1"/>
</dbReference>
<dbReference type="SMR" id="A5UJ98"/>
<dbReference type="STRING" id="420247.Msm_0071"/>
<dbReference type="EnsemblBacteria" id="ABQ86276">
    <property type="protein sequence ID" value="ABQ86276"/>
    <property type="gene ID" value="Msm_0071"/>
</dbReference>
<dbReference type="GeneID" id="78816695"/>
<dbReference type="KEGG" id="msi:Msm_0071"/>
<dbReference type="PATRIC" id="fig|420247.28.peg.73"/>
<dbReference type="eggNOG" id="arCOG00810">
    <property type="taxonomic scope" value="Archaea"/>
</dbReference>
<dbReference type="HOGENOM" id="CLU_009710_1_2_2"/>
<dbReference type="Proteomes" id="UP000001992">
    <property type="component" value="Chromosome"/>
</dbReference>
<dbReference type="GO" id="GO:0017101">
    <property type="term" value="C:aminoacyl-tRNA synthetase multienzyme complex"/>
    <property type="evidence" value="ECO:0007669"/>
    <property type="project" value="TreeGrafter"/>
</dbReference>
<dbReference type="GO" id="GO:0005829">
    <property type="term" value="C:cytosol"/>
    <property type="evidence" value="ECO:0007669"/>
    <property type="project" value="TreeGrafter"/>
</dbReference>
<dbReference type="GO" id="GO:0005524">
    <property type="term" value="F:ATP binding"/>
    <property type="evidence" value="ECO:0007669"/>
    <property type="project" value="UniProtKB-UniRule"/>
</dbReference>
<dbReference type="GO" id="GO:0046872">
    <property type="term" value="F:metal ion binding"/>
    <property type="evidence" value="ECO:0007669"/>
    <property type="project" value="UniProtKB-KW"/>
</dbReference>
<dbReference type="GO" id="GO:0004825">
    <property type="term" value="F:methionine-tRNA ligase activity"/>
    <property type="evidence" value="ECO:0007669"/>
    <property type="project" value="UniProtKB-UniRule"/>
</dbReference>
<dbReference type="GO" id="GO:0000049">
    <property type="term" value="F:tRNA binding"/>
    <property type="evidence" value="ECO:0007669"/>
    <property type="project" value="UniProtKB-KW"/>
</dbReference>
<dbReference type="GO" id="GO:0006431">
    <property type="term" value="P:methionyl-tRNA aminoacylation"/>
    <property type="evidence" value="ECO:0007669"/>
    <property type="project" value="UniProtKB-UniRule"/>
</dbReference>
<dbReference type="CDD" id="cd07957">
    <property type="entry name" value="Anticodon_Ia_Met"/>
    <property type="match status" value="1"/>
</dbReference>
<dbReference type="CDD" id="cd00814">
    <property type="entry name" value="MetRS_core"/>
    <property type="match status" value="1"/>
</dbReference>
<dbReference type="CDD" id="cd02800">
    <property type="entry name" value="tRNA_bind_EcMetRS_like"/>
    <property type="match status" value="1"/>
</dbReference>
<dbReference type="FunFam" id="2.20.28.20:FF:000001">
    <property type="entry name" value="Methionine--tRNA ligase"/>
    <property type="match status" value="1"/>
</dbReference>
<dbReference type="FunFam" id="2.40.50.140:FF:000042">
    <property type="entry name" value="Methionine--tRNA ligase"/>
    <property type="match status" value="1"/>
</dbReference>
<dbReference type="Gene3D" id="3.40.50.620">
    <property type="entry name" value="HUPs"/>
    <property type="match status" value="1"/>
</dbReference>
<dbReference type="Gene3D" id="1.10.730.10">
    <property type="entry name" value="Isoleucyl-tRNA Synthetase, Domain 1"/>
    <property type="match status" value="1"/>
</dbReference>
<dbReference type="Gene3D" id="2.20.28.20">
    <property type="entry name" value="Methionyl-tRNA synthetase, Zn-domain"/>
    <property type="match status" value="1"/>
</dbReference>
<dbReference type="Gene3D" id="2.40.50.140">
    <property type="entry name" value="Nucleic acid-binding proteins"/>
    <property type="match status" value="1"/>
</dbReference>
<dbReference type="HAMAP" id="MF_00098">
    <property type="entry name" value="Met_tRNA_synth_type1"/>
    <property type="match status" value="1"/>
</dbReference>
<dbReference type="InterPro" id="IPR041872">
    <property type="entry name" value="Anticodon_Met"/>
</dbReference>
<dbReference type="InterPro" id="IPR018247">
    <property type="entry name" value="EF_Hand_1_Ca_BS"/>
</dbReference>
<dbReference type="InterPro" id="IPR004495">
    <property type="entry name" value="Met-tRNA-synth_bsu_C"/>
</dbReference>
<dbReference type="InterPro" id="IPR023458">
    <property type="entry name" value="Met-tRNA_ligase_1"/>
</dbReference>
<dbReference type="InterPro" id="IPR014758">
    <property type="entry name" value="Met-tRNA_synth"/>
</dbReference>
<dbReference type="InterPro" id="IPR015413">
    <property type="entry name" value="Methionyl/Leucyl_tRNA_Synth"/>
</dbReference>
<dbReference type="InterPro" id="IPR033911">
    <property type="entry name" value="MetRS_core"/>
</dbReference>
<dbReference type="InterPro" id="IPR029038">
    <property type="entry name" value="MetRS_Zn"/>
</dbReference>
<dbReference type="InterPro" id="IPR012340">
    <property type="entry name" value="NA-bd_OB-fold"/>
</dbReference>
<dbReference type="InterPro" id="IPR014729">
    <property type="entry name" value="Rossmann-like_a/b/a_fold"/>
</dbReference>
<dbReference type="InterPro" id="IPR002547">
    <property type="entry name" value="tRNA-bd_dom"/>
</dbReference>
<dbReference type="InterPro" id="IPR009080">
    <property type="entry name" value="tRNAsynth_Ia_anticodon-bd"/>
</dbReference>
<dbReference type="NCBIfam" id="TIGR00398">
    <property type="entry name" value="metG"/>
    <property type="match status" value="1"/>
</dbReference>
<dbReference type="NCBIfam" id="TIGR00399">
    <property type="entry name" value="metG_C_term"/>
    <property type="match status" value="1"/>
</dbReference>
<dbReference type="NCBIfam" id="NF001100">
    <property type="entry name" value="PRK00133.1"/>
    <property type="match status" value="1"/>
</dbReference>
<dbReference type="PANTHER" id="PTHR45765">
    <property type="entry name" value="METHIONINE--TRNA LIGASE"/>
    <property type="match status" value="1"/>
</dbReference>
<dbReference type="PANTHER" id="PTHR45765:SF1">
    <property type="entry name" value="METHIONINE--TRNA LIGASE, CYTOPLASMIC"/>
    <property type="match status" value="1"/>
</dbReference>
<dbReference type="Pfam" id="PF19303">
    <property type="entry name" value="Anticodon_3"/>
    <property type="match status" value="1"/>
</dbReference>
<dbReference type="Pfam" id="PF09334">
    <property type="entry name" value="tRNA-synt_1g"/>
    <property type="match status" value="1"/>
</dbReference>
<dbReference type="Pfam" id="PF01588">
    <property type="entry name" value="tRNA_bind"/>
    <property type="match status" value="1"/>
</dbReference>
<dbReference type="PRINTS" id="PR01041">
    <property type="entry name" value="TRNASYNTHMET"/>
</dbReference>
<dbReference type="SUPFAM" id="SSF47323">
    <property type="entry name" value="Anticodon-binding domain of a subclass of class I aminoacyl-tRNA synthetases"/>
    <property type="match status" value="1"/>
</dbReference>
<dbReference type="SUPFAM" id="SSF57770">
    <property type="entry name" value="Methionyl-tRNA synthetase (MetRS), Zn-domain"/>
    <property type="match status" value="1"/>
</dbReference>
<dbReference type="SUPFAM" id="SSF50249">
    <property type="entry name" value="Nucleic acid-binding proteins"/>
    <property type="match status" value="1"/>
</dbReference>
<dbReference type="SUPFAM" id="SSF52374">
    <property type="entry name" value="Nucleotidylyl transferase"/>
    <property type="match status" value="1"/>
</dbReference>
<dbReference type="PROSITE" id="PS50886">
    <property type="entry name" value="TRBD"/>
    <property type="match status" value="1"/>
</dbReference>
<name>SYM_METS3</name>
<gene>
    <name evidence="1" type="primary">metG</name>
    <name type="ordered locus">Msm_0071</name>
</gene>
<feature type="chain" id="PRO_0000331939" description="Methionine--tRNA ligase">
    <location>
        <begin position="1"/>
        <end position="660"/>
    </location>
</feature>
<feature type="domain" description="tRNA-binding" evidence="1">
    <location>
        <begin position="563"/>
        <end position="660"/>
    </location>
</feature>
<feature type="short sequence motif" description="'HIGH' region">
    <location>
        <begin position="11"/>
        <end position="21"/>
    </location>
</feature>
<feature type="short sequence motif" description="'KMSKS' region">
    <location>
        <begin position="325"/>
        <end position="329"/>
    </location>
</feature>
<feature type="binding site" evidence="1">
    <location>
        <position position="143"/>
    </location>
    <ligand>
        <name>Zn(2+)</name>
        <dbReference type="ChEBI" id="CHEBI:29105"/>
    </ligand>
</feature>
<feature type="binding site" evidence="1">
    <location>
        <position position="146"/>
    </location>
    <ligand>
        <name>Zn(2+)</name>
        <dbReference type="ChEBI" id="CHEBI:29105"/>
    </ligand>
</feature>
<feature type="binding site" evidence="1">
    <location>
        <position position="155"/>
    </location>
    <ligand>
        <name>Zn(2+)</name>
        <dbReference type="ChEBI" id="CHEBI:29105"/>
    </ligand>
</feature>
<feature type="binding site" evidence="1">
    <location>
        <position position="158"/>
    </location>
    <ligand>
        <name>Zn(2+)</name>
        <dbReference type="ChEBI" id="CHEBI:29105"/>
    </ligand>
</feature>
<feature type="binding site" evidence="1">
    <location>
        <position position="328"/>
    </location>
    <ligand>
        <name>ATP</name>
        <dbReference type="ChEBI" id="CHEBI:30616"/>
    </ligand>
</feature>
<keyword id="KW-0030">Aminoacyl-tRNA synthetase</keyword>
<keyword id="KW-0067">ATP-binding</keyword>
<keyword id="KW-0963">Cytoplasm</keyword>
<keyword id="KW-0436">Ligase</keyword>
<keyword id="KW-0479">Metal-binding</keyword>
<keyword id="KW-0547">Nucleotide-binding</keyword>
<keyword id="KW-0648">Protein biosynthesis</keyword>
<keyword id="KW-0694">RNA-binding</keyword>
<keyword id="KW-0820">tRNA-binding</keyword>
<keyword id="KW-0862">Zinc</keyword>
<sequence length="660" mass="75894">MSKIFISCALPYANGPCHLGHIRSTYLPADIYARYNRMIDNDVLLVCATDEHGTPIAVKADKENKKPIEIAKRYHDMIVRDVESMNISLDNFTRTTDDLHYEIAQNFFLELYNKGLIYKKDIQQLYCEKCNKFLPDRYVEGICPVCGSEARGDHCEKCGRALEPTELDEPKCLTCGSTPVIKDTYQYFFKLSEFEDDLKDYIDNNENLPANVRNYAKNWLKEGLNDWVLTRDMDWGIPLPLDEAKGKVLYVWVEAFLGYISSAAQWSRETGIKWEDYWNDTAIHFIGKDIIYHHSIFWPGLLKAYGCKLPDNIYAGEFLSLEGEKMSTSKNWVVWIADFVDKFDPDLLRYYLTINAPLNKDTDFSWDDFQRRNNDELADVIGNFLHRTFTFTHKFFDGEIPEYKNPSAEDNKFKEIIEKLPDTVGEYISDFEFRDGLLEIYRVAKIGNKYFNDQEPWKAVKEDMQKAANCLYLSNQLAKTLAYVLKPYIPNKADAIAKIINLTTPDEWKDAKVPLAEGHKINKAKPLFTKIEDDVINKQKEELQKNLKESEDENMSDLISIDDFDKVVIKIGQVKEAEKIEKSDKLLKLQVDIGDETRQIVAGLAKQYAPEELIDRKVAVVVNLQPAKLFGTLSEGMILATGESAALLSPDECEVGERIQ</sequence>
<comment type="function">
    <text evidence="1">Is required not only for elongation of protein synthesis but also for the initiation of all mRNA translation through initiator tRNA(fMet) aminoacylation.</text>
</comment>
<comment type="catalytic activity">
    <reaction evidence="1">
        <text>tRNA(Met) + L-methionine + ATP = L-methionyl-tRNA(Met) + AMP + diphosphate</text>
        <dbReference type="Rhea" id="RHEA:13481"/>
        <dbReference type="Rhea" id="RHEA-COMP:9667"/>
        <dbReference type="Rhea" id="RHEA-COMP:9698"/>
        <dbReference type="ChEBI" id="CHEBI:30616"/>
        <dbReference type="ChEBI" id="CHEBI:33019"/>
        <dbReference type="ChEBI" id="CHEBI:57844"/>
        <dbReference type="ChEBI" id="CHEBI:78442"/>
        <dbReference type="ChEBI" id="CHEBI:78530"/>
        <dbReference type="ChEBI" id="CHEBI:456215"/>
        <dbReference type="EC" id="6.1.1.10"/>
    </reaction>
</comment>
<comment type="cofactor">
    <cofactor evidence="1">
        <name>Zn(2+)</name>
        <dbReference type="ChEBI" id="CHEBI:29105"/>
    </cofactor>
    <text evidence="1">Binds 1 zinc ion per subunit.</text>
</comment>
<comment type="subunit">
    <text evidence="1">Homodimer.</text>
</comment>
<comment type="subcellular location">
    <subcellularLocation>
        <location evidence="1">Cytoplasm</location>
    </subcellularLocation>
</comment>
<comment type="similarity">
    <text evidence="1">Belongs to the class-I aminoacyl-tRNA synthetase family. MetG type 1 subfamily.</text>
</comment>
<evidence type="ECO:0000255" key="1">
    <source>
        <dbReference type="HAMAP-Rule" id="MF_00098"/>
    </source>
</evidence>
<protein>
    <recommendedName>
        <fullName evidence="1">Methionine--tRNA ligase</fullName>
        <ecNumber evidence="1">6.1.1.10</ecNumber>
    </recommendedName>
    <alternativeName>
        <fullName evidence="1">Methionyl-tRNA synthetase</fullName>
        <shortName evidence="1">MetRS</shortName>
    </alternativeName>
</protein>
<proteinExistence type="inferred from homology"/>
<accession>A5UJ98</accession>
<organism>
    <name type="scientific">Methanobrevibacter smithii (strain ATCC 35061 / DSM 861 / OCM 144 / PS)</name>
    <dbReference type="NCBI Taxonomy" id="420247"/>
    <lineage>
        <taxon>Archaea</taxon>
        <taxon>Methanobacteriati</taxon>
        <taxon>Methanobacteriota</taxon>
        <taxon>Methanomada group</taxon>
        <taxon>Methanobacteria</taxon>
        <taxon>Methanobacteriales</taxon>
        <taxon>Methanobacteriaceae</taxon>
        <taxon>Methanobrevibacter</taxon>
    </lineage>
</organism>
<reference key="1">
    <citation type="journal article" date="2007" name="Proc. Natl. Acad. Sci. U.S.A.">
        <title>Genomic and metabolic adaptations of Methanobrevibacter smithii to the human gut.</title>
        <authorList>
            <person name="Samuel B.S."/>
            <person name="Hansen E.E."/>
            <person name="Manchester J.K."/>
            <person name="Coutinho P.M."/>
            <person name="Henrissat B."/>
            <person name="Fulton R."/>
            <person name="Latreille P."/>
            <person name="Kim K."/>
            <person name="Wilson R.K."/>
            <person name="Gordon J.I."/>
        </authorList>
    </citation>
    <scope>NUCLEOTIDE SEQUENCE [LARGE SCALE GENOMIC DNA]</scope>
    <source>
        <strain>ATCC 35061 / DSM 861 / OCM 144 / PS</strain>
    </source>
</reference>